<protein>
    <recommendedName>
        <fullName>Leukemia-associated protein 1</fullName>
    </recommendedName>
    <alternativeName>
        <fullName>Deleted in lymphocytic leukemia 1</fullName>
    </alternativeName>
    <alternativeName>
        <fullName>HBV X-transactivated gene 6 protein</fullName>
    </alternativeName>
    <alternativeName>
        <fullName>HBV XAg-transactivated protein 6</fullName>
    </alternativeName>
</protein>
<reference key="1">
    <citation type="journal article" date="1997" name="Oncogene">
        <title>Cloning of two candidate tumor suppressor genes within a 10 kb region on chromosome 13q14, frequently deleted in chronic lymphocytic leukemia.</title>
        <authorList>
            <person name="Liu Y."/>
            <person name="Corcoran M."/>
            <person name="Rasool O."/>
            <person name="Ivanova G."/>
            <person name="Ibbotson R."/>
            <person name="Grander D."/>
            <person name="Iyengar A."/>
            <person name="Baranova A."/>
            <person name="Kashuba V."/>
            <person name="Merup M."/>
            <person name="Wu X."/>
            <person name="Gardiner A."/>
            <person name="Mullenbach R."/>
            <person name="Poltaraus A."/>
            <person name="Hulstrom A.L."/>
            <person name="Juliusson G."/>
            <person name="Chapman R."/>
            <person name="Tiller M."/>
            <person name="Cotter F."/>
            <person name="Gahrton G."/>
            <person name="Yankovsky N."/>
            <person name="Zabarovsky E."/>
            <person name="Einhorn S."/>
            <person name="Oscier D."/>
        </authorList>
    </citation>
    <scope>NUCLEOTIDE SEQUENCE [GENOMIC DNA / MRNA]</scope>
</reference>
<reference key="2">
    <citation type="submission" date="2002-03" db="EMBL/GenBank/DDBJ databases">
        <title>Cloning and identification of human gene 6 transactivated by hepatitis B virus X antigen.</title>
        <authorList>
            <person name="Liu Y."/>
            <person name="Cheng J."/>
            <person name="Lu Y."/>
            <person name="Wang G."/>
            <person name="Li K."/>
            <person name="Chen J."/>
            <person name="Li L."/>
        </authorList>
    </citation>
    <scope>NUCLEOTIDE SEQUENCE [MRNA]</scope>
</reference>
<reference key="3">
    <citation type="journal article" date="2004" name="Nature">
        <title>The DNA sequence and analysis of human chromosome 13.</title>
        <authorList>
            <person name="Dunham A."/>
            <person name="Matthews L.H."/>
            <person name="Burton J."/>
            <person name="Ashurst J.L."/>
            <person name="Howe K.L."/>
            <person name="Ashcroft K.J."/>
            <person name="Beare D.M."/>
            <person name="Burford D.C."/>
            <person name="Hunt S.E."/>
            <person name="Griffiths-Jones S."/>
            <person name="Jones M.C."/>
            <person name="Keenan S.J."/>
            <person name="Oliver K."/>
            <person name="Scott C.E."/>
            <person name="Ainscough R."/>
            <person name="Almeida J.P."/>
            <person name="Ambrose K.D."/>
            <person name="Andrews D.T."/>
            <person name="Ashwell R.I.S."/>
            <person name="Babbage A.K."/>
            <person name="Bagguley C.L."/>
            <person name="Bailey J."/>
            <person name="Bannerjee R."/>
            <person name="Barlow K.F."/>
            <person name="Bates K."/>
            <person name="Beasley H."/>
            <person name="Bird C.P."/>
            <person name="Bray-Allen S."/>
            <person name="Brown A.J."/>
            <person name="Brown J.Y."/>
            <person name="Burrill W."/>
            <person name="Carder C."/>
            <person name="Carter N.P."/>
            <person name="Chapman J.C."/>
            <person name="Clamp M.E."/>
            <person name="Clark S.Y."/>
            <person name="Clarke G."/>
            <person name="Clee C.M."/>
            <person name="Clegg S.C."/>
            <person name="Cobley V."/>
            <person name="Collins J.E."/>
            <person name="Corby N."/>
            <person name="Coville G.J."/>
            <person name="Deloukas P."/>
            <person name="Dhami P."/>
            <person name="Dunham I."/>
            <person name="Dunn M."/>
            <person name="Earthrowl M.E."/>
            <person name="Ellington A.G."/>
            <person name="Faulkner L."/>
            <person name="Frankish A.G."/>
            <person name="Frankland J."/>
            <person name="French L."/>
            <person name="Garner P."/>
            <person name="Garnett J."/>
            <person name="Gilbert J.G.R."/>
            <person name="Gilson C.J."/>
            <person name="Ghori J."/>
            <person name="Grafham D.V."/>
            <person name="Gribble S.M."/>
            <person name="Griffiths C."/>
            <person name="Hall R.E."/>
            <person name="Hammond S."/>
            <person name="Harley J.L."/>
            <person name="Hart E.A."/>
            <person name="Heath P.D."/>
            <person name="Howden P.J."/>
            <person name="Huckle E.J."/>
            <person name="Hunt P.J."/>
            <person name="Hunt A.R."/>
            <person name="Johnson C."/>
            <person name="Johnson D."/>
            <person name="Kay M."/>
            <person name="Kimberley A.M."/>
            <person name="King A."/>
            <person name="Laird G.K."/>
            <person name="Langford C.J."/>
            <person name="Lawlor S."/>
            <person name="Leongamornlert D.A."/>
            <person name="Lloyd D.M."/>
            <person name="Lloyd C."/>
            <person name="Loveland J.E."/>
            <person name="Lovell J."/>
            <person name="Martin S."/>
            <person name="Mashreghi-Mohammadi M."/>
            <person name="McLaren S.J."/>
            <person name="McMurray A."/>
            <person name="Milne S."/>
            <person name="Moore M.J.F."/>
            <person name="Nickerson T."/>
            <person name="Palmer S.A."/>
            <person name="Pearce A.V."/>
            <person name="Peck A.I."/>
            <person name="Pelan S."/>
            <person name="Phillimore B."/>
            <person name="Porter K.M."/>
            <person name="Rice C.M."/>
            <person name="Searle S."/>
            <person name="Sehra H.K."/>
            <person name="Shownkeen R."/>
            <person name="Skuce C.D."/>
            <person name="Smith M."/>
            <person name="Steward C.A."/>
            <person name="Sycamore N."/>
            <person name="Tester J."/>
            <person name="Thomas D.W."/>
            <person name="Tracey A."/>
            <person name="Tromans A."/>
            <person name="Tubby B."/>
            <person name="Wall M."/>
            <person name="Wallis J.M."/>
            <person name="West A.P."/>
            <person name="Whitehead S.L."/>
            <person name="Willey D.L."/>
            <person name="Wilming L."/>
            <person name="Wray P.W."/>
            <person name="Wright M.W."/>
            <person name="Young L."/>
            <person name="Coulson A."/>
            <person name="Durbin R.M."/>
            <person name="Hubbard T."/>
            <person name="Sulston J.E."/>
            <person name="Beck S."/>
            <person name="Bentley D.R."/>
            <person name="Rogers J."/>
            <person name="Ross M.T."/>
        </authorList>
    </citation>
    <scope>NUCLEOTIDE SEQUENCE [LARGE SCALE GENOMIC DNA]</scope>
</reference>
<reference key="4">
    <citation type="submission" date="2005-07" db="EMBL/GenBank/DDBJ databases">
        <authorList>
            <person name="Mural R.J."/>
            <person name="Istrail S."/>
            <person name="Sutton G.G."/>
            <person name="Florea L."/>
            <person name="Halpern A.L."/>
            <person name="Mobarry C.M."/>
            <person name="Lippert R."/>
            <person name="Walenz B."/>
            <person name="Shatkay H."/>
            <person name="Dew I."/>
            <person name="Miller J.R."/>
            <person name="Flanigan M.J."/>
            <person name="Edwards N.J."/>
            <person name="Bolanos R."/>
            <person name="Fasulo D."/>
            <person name="Halldorsson B.V."/>
            <person name="Hannenhalli S."/>
            <person name="Turner R."/>
            <person name="Yooseph S."/>
            <person name="Lu F."/>
            <person name="Nusskern D.R."/>
            <person name="Shue B.C."/>
            <person name="Zheng X.H."/>
            <person name="Zhong F."/>
            <person name="Delcher A.L."/>
            <person name="Huson D.H."/>
            <person name="Kravitz S.A."/>
            <person name="Mouchard L."/>
            <person name="Reinert K."/>
            <person name="Remington K.A."/>
            <person name="Clark A.G."/>
            <person name="Waterman M.S."/>
            <person name="Eichler E.E."/>
            <person name="Adams M.D."/>
            <person name="Hunkapiller M.W."/>
            <person name="Myers E.W."/>
            <person name="Venter J.C."/>
        </authorList>
    </citation>
    <scope>NUCLEOTIDE SEQUENCE [LARGE SCALE GENOMIC DNA]</scope>
</reference>
<reference key="5">
    <citation type="journal article" date="2004" name="Genome Res.">
        <title>The status, quality, and expansion of the NIH full-length cDNA project: the Mammalian Gene Collection (MGC).</title>
        <authorList>
            <consortium name="The MGC Project Team"/>
        </authorList>
    </citation>
    <scope>NUCLEOTIDE SEQUENCE [LARGE SCALE MRNA]</scope>
    <source>
        <tissue>Placenta</tissue>
    </source>
</reference>
<reference key="6">
    <citation type="journal article" date="2000" name="Genomics">
        <title>Comparative sequence analysis of a region on human chromosome 13q14, frequently deleted in B-cell chronic lymphocytic leukemia, and its homologous region on mouse chromosome 14.</title>
        <authorList>
            <person name="Kapanadze B."/>
            <person name="Makeeva N."/>
            <person name="Corcoran M."/>
            <person name="Jareborg N."/>
            <person name="Hammarsund M."/>
            <person name="Baranova A."/>
            <person name="Zabarovsky E."/>
            <person name="Vorontsova O."/>
            <person name="Merup M."/>
            <person name="Gahrton G."/>
            <person name="Jansson M."/>
            <person name="Yankovsky N."/>
            <person name="Einhorn S."/>
            <person name="Oscier D."/>
            <person name="Grander D."/>
            <person name="Sangfelt O."/>
        </authorList>
    </citation>
    <scope>NUCLEOTIDE SEQUENCE [GENOMIC DNA] OF 1-40</scope>
</reference>
<organism>
    <name type="scientific">Homo sapiens</name>
    <name type="common">Human</name>
    <dbReference type="NCBI Taxonomy" id="9606"/>
    <lineage>
        <taxon>Eukaryota</taxon>
        <taxon>Metazoa</taxon>
        <taxon>Chordata</taxon>
        <taxon>Craniata</taxon>
        <taxon>Vertebrata</taxon>
        <taxon>Euteleostomi</taxon>
        <taxon>Mammalia</taxon>
        <taxon>Eutheria</taxon>
        <taxon>Euarchontoglires</taxon>
        <taxon>Primates</taxon>
        <taxon>Haplorrhini</taxon>
        <taxon>Catarrhini</taxon>
        <taxon>Hominidae</taxon>
        <taxon>Homo</taxon>
    </lineage>
</organism>
<feature type="chain" id="PRO_0000084409" description="Leukemia-associated protein 1">
    <location>
        <begin position="1"/>
        <end position="78"/>
    </location>
</feature>
<comment type="function">
    <text>May act as a tumor suppressor.</text>
</comment>
<comment type="interaction">
    <interactant intactId="EBI-710057">
        <id>O43261</id>
    </interactant>
    <interactant intactId="EBI-399080">
        <id>Q92993</id>
        <label>KAT5</label>
    </interactant>
    <organismsDiffer>false</organismsDiffer>
    <experiments>2</experiments>
</comment>
<comment type="sequence caution" evidence="1">
    <conflict type="frameshift">
        <sequence resource="EMBL-CDS" id="CAA75515"/>
    </conflict>
</comment>
<gene>
    <name type="primary">DLEU1</name>
    <name type="synonym">LEU1</name>
    <name type="synonym">XTP6</name>
</gene>
<accession>O43261</accession>
<accession>Q547G6</accession>
<accession>Q8TE10</accession>
<accession>Q96QY5</accession>
<evidence type="ECO:0000305" key="1"/>
<name>LEU1_HUMAN</name>
<dbReference type="EMBL" id="Y15227">
    <property type="protein sequence ID" value="CAA75515.1"/>
    <property type="status" value="ALT_FRAME"/>
    <property type="molecule type" value="mRNA"/>
</dbReference>
<dbReference type="EMBL" id="Y15381">
    <property type="protein sequence ID" value="CAA75600.1"/>
    <property type="molecule type" value="Genomic_DNA"/>
</dbReference>
<dbReference type="EMBL" id="AF490255">
    <property type="protein sequence ID" value="AAO85463.1"/>
    <property type="molecule type" value="mRNA"/>
</dbReference>
<dbReference type="EMBL" id="AL137060">
    <property type="status" value="NOT_ANNOTATED_CDS"/>
    <property type="molecule type" value="Genomic_DNA"/>
</dbReference>
<dbReference type="EMBL" id="CH471075">
    <property type="protein sequence ID" value="EAX08858.1"/>
    <property type="molecule type" value="Genomic_DNA"/>
</dbReference>
<dbReference type="EMBL" id="BC020692">
    <property type="status" value="NOT_ANNOTATED_CDS"/>
    <property type="molecule type" value="mRNA"/>
</dbReference>
<dbReference type="EMBL" id="AF328925">
    <property type="protein sequence ID" value="AAL95698.1"/>
    <property type="molecule type" value="Genomic_DNA"/>
</dbReference>
<dbReference type="IntAct" id="O43261">
    <property type="interactions" value="19"/>
</dbReference>
<dbReference type="BioMuta" id="HGNC:13747"/>
<dbReference type="PaxDb" id="9606-ENSP00000367422"/>
<dbReference type="UCSC" id="uc058xbn.1">
    <property type="organism name" value="human"/>
</dbReference>
<dbReference type="AGR" id="HGNC:13747"/>
<dbReference type="GeneCards" id="DLEU1"/>
<dbReference type="HGNC" id="HGNC:13747">
    <property type="gene designation" value="DLEU1"/>
</dbReference>
<dbReference type="MIM" id="605765">
    <property type="type" value="gene"/>
</dbReference>
<dbReference type="neXtProt" id="NX_O43261"/>
<dbReference type="eggNOG" id="ENOG502TI68">
    <property type="taxonomic scope" value="Eukaryota"/>
</dbReference>
<dbReference type="HOGENOM" id="CLU_2704229_0_0_1"/>
<dbReference type="InParanoid" id="O43261"/>
<dbReference type="PAN-GO" id="O43261">
    <property type="GO annotations" value="0 GO annotations based on evolutionary models"/>
</dbReference>
<dbReference type="PhylomeDB" id="O43261"/>
<dbReference type="TreeFam" id="TF341071"/>
<dbReference type="PathwayCommons" id="O43261"/>
<dbReference type="SignaLink" id="O43261"/>
<dbReference type="ChiTaRS" id="DLEU1">
    <property type="organism name" value="human"/>
</dbReference>
<dbReference type="Pharos" id="O43261">
    <property type="development level" value="Tbio"/>
</dbReference>
<dbReference type="PRO" id="PR:O43261"/>
<dbReference type="Proteomes" id="UP000005640">
    <property type="component" value="Unplaced"/>
</dbReference>
<dbReference type="RNAct" id="O43261">
    <property type="molecule type" value="protein"/>
</dbReference>
<proteinExistence type="evidence at protein level"/>
<sequence>MRPCIWIHVHLKPPCRLVELLPFSSALQGLSHLSLGTTLPVILPERNEEQNLQELSHNADKYQMGDCCKEEIDDSIFY</sequence>
<keyword id="KW-1185">Reference proteome</keyword>
<keyword id="KW-0043">Tumor suppressor</keyword>